<reference key="1">
    <citation type="journal article" date="2003" name="Arch. Virol.">
        <title>Characterization of genotype II Rubella virus strains.</title>
        <authorList>
            <person name="Zheng D.-P."/>
            <person name="Zhou Y.M."/>
            <person name="Zhao K."/>
            <person name="Han Y.-R."/>
            <person name="Frey T.K."/>
        </authorList>
    </citation>
    <scope>NUCLEOTIDE SEQUENCE [GENOMIC RNA]</scope>
</reference>
<accession>Q6X2U1</accession>
<name>POLS_RUBVC</name>
<organismHost>
    <name type="scientific">Homo sapiens</name>
    <name type="common">Human</name>
    <dbReference type="NCBI Taxonomy" id="9606"/>
</organismHost>
<feature type="chain" id="PRO_0000238987" description="Capsid protein">
    <location>
        <begin position="1"/>
        <end position="300"/>
    </location>
</feature>
<feature type="chain" id="PRO_0000238988" description="Spike glycoprotein E2">
    <location>
        <begin position="301"/>
        <end position="582"/>
    </location>
</feature>
<feature type="chain" id="PRO_0000238989" description="Spike glycoprotein E1">
    <location>
        <begin position="583"/>
        <end position="1063"/>
    </location>
</feature>
<feature type="topological domain" description="Extracellular" evidence="4">
    <location>
        <begin position="301"/>
        <end position="534"/>
    </location>
</feature>
<feature type="transmembrane region" description="Helical; Note=Golgi retention signal" evidence="3">
    <location>
        <begin position="535"/>
        <end position="555"/>
    </location>
</feature>
<feature type="topological domain" description="Cytoplasmic" evidence="4">
    <location>
        <begin position="556"/>
        <end position="582"/>
    </location>
</feature>
<feature type="topological domain" description="Extracellular" evidence="4">
    <location>
        <begin position="583"/>
        <end position="1028"/>
    </location>
</feature>
<feature type="transmembrane region" description="Helical; Note=Endoplasmic reticulum retention signal" evidence="3">
    <location>
        <begin position="1029"/>
        <end position="1049"/>
    </location>
</feature>
<feature type="topological domain" description="Extracellular" evidence="4">
    <location>
        <begin position="1050"/>
        <end position="1063"/>
    </location>
</feature>
<feature type="region of interest" description="Disordered" evidence="5">
    <location>
        <begin position="23"/>
        <end position="131"/>
    </location>
</feature>
<feature type="region of interest" description="Human C1QBP/SF2P32-binding" evidence="1">
    <location>
        <begin position="30"/>
        <end position="69"/>
    </location>
</feature>
<feature type="region of interest" description="Functions as E2 signal peptide" evidence="3">
    <location>
        <begin position="279"/>
        <end position="300"/>
    </location>
</feature>
<feature type="region of interest" description="Disordered" evidence="5">
    <location>
        <begin position="305"/>
        <end position="327"/>
    </location>
</feature>
<feature type="region of interest" description="Functions as E1 signal peptide" evidence="3">
    <location>
        <begin position="562"/>
        <end position="582"/>
    </location>
</feature>
<feature type="compositionally biased region" description="Basic residues" evidence="5">
    <location>
        <begin position="59"/>
        <end position="69"/>
    </location>
</feature>
<feature type="compositionally biased region" description="Basic and acidic residues" evidence="5">
    <location>
        <begin position="70"/>
        <end position="87"/>
    </location>
</feature>
<feature type="compositionally biased region" description="Pro residues" evidence="5">
    <location>
        <begin position="93"/>
        <end position="107"/>
    </location>
</feature>
<feature type="binding site" evidence="3">
    <location>
        <position position="670"/>
    </location>
    <ligand>
        <name>Ca(2+)</name>
        <dbReference type="ChEBI" id="CHEBI:29108"/>
    </ligand>
</feature>
<feature type="binding site" evidence="3">
    <location>
        <position position="671"/>
    </location>
    <ligand>
        <name>Ca(2+)</name>
        <dbReference type="ChEBI" id="CHEBI:29108"/>
    </ligand>
</feature>
<feature type="binding site" evidence="3">
    <location>
        <position position="718"/>
    </location>
    <ligand>
        <name>Ca(2+)</name>
        <dbReference type="ChEBI" id="CHEBI:29108"/>
    </ligand>
</feature>
<feature type="binding site" evidence="3">
    <location>
        <position position="719"/>
    </location>
    <ligand>
        <name>Ca(2+)</name>
        <dbReference type="ChEBI" id="CHEBI:29108"/>
    </ligand>
</feature>
<feature type="site" description="Cleavage; by host signal peptidase" evidence="4">
    <location>
        <begin position="300"/>
        <end position="301"/>
    </location>
</feature>
<feature type="site" description="Cleavage; by host signal peptidase" evidence="4">
    <location>
        <begin position="582"/>
        <end position="583"/>
    </location>
</feature>
<feature type="modified residue" description="Phosphoserine; by host" evidence="1">
    <location>
        <position position="46"/>
    </location>
</feature>
<feature type="glycosylation site" description="N-linked (GlcNAc...) asparagine; by host" evidence="4">
    <location>
        <position position="353"/>
    </location>
</feature>
<feature type="glycosylation site" description="N-linked (GlcNAc...) asparagine; by host" evidence="4">
    <location>
        <position position="371"/>
    </location>
</feature>
<feature type="glycosylation site" description="N-linked (GlcNAc...) asparagine; by host" evidence="4">
    <location>
        <position position="410"/>
    </location>
</feature>
<feature type="glycosylation site" description="N-linked (GlcNAc...) asparagine; by host" evidence="4">
    <location>
        <position position="429"/>
    </location>
</feature>
<feature type="glycosylation site" description="N-linked (GlcNAc...) asparagine; by host" evidence="3">
    <location>
        <position position="658"/>
    </location>
</feature>
<feature type="glycosylation site" description="N-linked (GlcNAc...) asparagine; by host" evidence="3">
    <location>
        <position position="759"/>
    </location>
</feature>
<feature type="glycosylation site" description="N-linked (GlcNAc...) asparagine; by host" evidence="3">
    <location>
        <position position="791"/>
    </location>
</feature>
<feature type="glycosylation site" description="O-linked (GalNAc...) threonine; by host" evidence="3">
    <location>
        <position position="1011"/>
    </location>
</feature>
<feature type="glycosylation site" description="O-linked (GalNAc...) threonine; by host" evidence="3">
    <location>
        <position position="1012"/>
    </location>
</feature>
<feature type="disulfide bond" evidence="3">
    <location>
        <begin position="153"/>
        <end position="197"/>
    </location>
</feature>
<feature type="disulfide bond" evidence="1">
    <location>
        <begin position="590"/>
        <end position="595"/>
    </location>
</feature>
<feature type="disulfide bond" evidence="1">
    <location>
        <begin position="619"/>
        <end position="824"/>
    </location>
</feature>
<feature type="disulfide bond" evidence="1">
    <location>
        <begin position="641"/>
        <end position="653"/>
    </location>
</feature>
<feature type="disulfide bond" evidence="1">
    <location>
        <begin position="699"/>
        <end position="712"/>
    </location>
</feature>
<feature type="disulfide bond" evidence="1">
    <location>
        <begin position="758"/>
        <end position="767"/>
    </location>
</feature>
<feature type="disulfide bond" evidence="1">
    <location>
        <begin position="807"/>
        <end position="817"/>
    </location>
</feature>
<feature type="disulfide bond" evidence="1">
    <location>
        <begin position="931"/>
        <end position="934"/>
    </location>
</feature>
<feature type="disulfide bond" evidence="1">
    <location>
        <begin position="950"/>
        <end position="983"/>
    </location>
</feature>
<evidence type="ECO:0000250" key="1"/>
<evidence type="ECO:0000250" key="2">
    <source>
        <dbReference type="UniProtKB" id="P07566"/>
    </source>
</evidence>
<evidence type="ECO:0000250" key="3">
    <source>
        <dbReference type="UniProtKB" id="P08563"/>
    </source>
</evidence>
<evidence type="ECO:0000255" key="4"/>
<evidence type="ECO:0000256" key="5">
    <source>
        <dbReference type="SAM" id="MobiDB-lite"/>
    </source>
</evidence>
<proteinExistence type="inferred from homology"/>
<dbReference type="EMBL" id="AY258323">
    <property type="protein sequence ID" value="AAP82235.1"/>
    <property type="molecule type" value="Genomic_RNA"/>
</dbReference>
<dbReference type="SMR" id="Q6X2U1"/>
<dbReference type="IntAct" id="Q6X2U1">
    <property type="interactions" value="2"/>
</dbReference>
<dbReference type="Proteomes" id="UP000007145">
    <property type="component" value="Genome"/>
</dbReference>
<dbReference type="GO" id="GO:0044178">
    <property type="term" value="C:host cell Golgi membrane"/>
    <property type="evidence" value="ECO:0007669"/>
    <property type="project" value="UniProtKB-SubCell"/>
</dbReference>
<dbReference type="GO" id="GO:0033650">
    <property type="term" value="C:host cell mitochondrion"/>
    <property type="evidence" value="ECO:0007669"/>
    <property type="project" value="UniProtKB-SubCell"/>
</dbReference>
<dbReference type="GO" id="GO:0016020">
    <property type="term" value="C:membrane"/>
    <property type="evidence" value="ECO:0007669"/>
    <property type="project" value="UniProtKB-KW"/>
</dbReference>
<dbReference type="GO" id="GO:0039619">
    <property type="term" value="C:T=4 icosahedral viral capsid"/>
    <property type="evidence" value="ECO:0007669"/>
    <property type="project" value="UniProtKB-KW"/>
</dbReference>
<dbReference type="GO" id="GO:0019031">
    <property type="term" value="C:viral envelope"/>
    <property type="evidence" value="ECO:0007669"/>
    <property type="project" value="UniProtKB-KW"/>
</dbReference>
<dbReference type="GO" id="GO:0019013">
    <property type="term" value="C:viral nucleocapsid"/>
    <property type="evidence" value="ECO:0007669"/>
    <property type="project" value="InterPro"/>
</dbReference>
<dbReference type="GO" id="GO:0055036">
    <property type="term" value="C:virion membrane"/>
    <property type="evidence" value="ECO:0007669"/>
    <property type="project" value="UniProtKB-SubCell"/>
</dbReference>
<dbReference type="GO" id="GO:0046872">
    <property type="term" value="F:metal ion binding"/>
    <property type="evidence" value="ECO:0007669"/>
    <property type="project" value="UniProtKB-KW"/>
</dbReference>
<dbReference type="GO" id="GO:0003723">
    <property type="term" value="F:RNA binding"/>
    <property type="evidence" value="ECO:0007669"/>
    <property type="project" value="UniProtKB-KW"/>
</dbReference>
<dbReference type="GO" id="GO:0075512">
    <property type="term" value="P:clathrin-dependent endocytosis of virus by host cell"/>
    <property type="evidence" value="ECO:0007669"/>
    <property type="project" value="UniProtKB-KW"/>
</dbReference>
<dbReference type="GO" id="GO:0039654">
    <property type="term" value="P:fusion of virus membrane with host endosome membrane"/>
    <property type="evidence" value="ECO:0007669"/>
    <property type="project" value="UniProtKB-KW"/>
</dbReference>
<dbReference type="GO" id="GO:0019062">
    <property type="term" value="P:virion attachment to host cell"/>
    <property type="evidence" value="ECO:0007669"/>
    <property type="project" value="UniProtKB-KW"/>
</dbReference>
<dbReference type="Gene3D" id="2.60.98.30">
    <property type="entry name" value="Rubella membrane glycoprotein E1, domain 1"/>
    <property type="match status" value="1"/>
</dbReference>
<dbReference type="Gene3D" id="3.30.67.20">
    <property type="entry name" value="Rubella membrane glycoprotein E1, domain 2"/>
    <property type="match status" value="2"/>
</dbReference>
<dbReference type="Gene3D" id="2.60.40.2650">
    <property type="entry name" value="Rubella membrane glycoprotein E1, domain 3"/>
    <property type="match status" value="1"/>
</dbReference>
<dbReference type="Gene3D" id="3.10.50.50">
    <property type="entry name" value="Rubella virus capsid protein"/>
    <property type="match status" value="1"/>
</dbReference>
<dbReference type="InterPro" id="IPR008819">
    <property type="entry name" value="Rubella_Capsid"/>
</dbReference>
<dbReference type="InterPro" id="IPR043106">
    <property type="entry name" value="Rubella_Capsid_sf"/>
</dbReference>
<dbReference type="InterPro" id="IPR008820">
    <property type="entry name" value="Rubella_E1"/>
</dbReference>
<dbReference type="InterPro" id="IPR042500">
    <property type="entry name" value="Rubella_E1_1"/>
</dbReference>
<dbReference type="InterPro" id="IPR042498">
    <property type="entry name" value="Rubella_E1_2"/>
</dbReference>
<dbReference type="InterPro" id="IPR042499">
    <property type="entry name" value="Rubella_E1_3"/>
</dbReference>
<dbReference type="InterPro" id="IPR008821">
    <property type="entry name" value="Rubella_E2"/>
</dbReference>
<dbReference type="PANTHER" id="PTHR13037">
    <property type="entry name" value="FORMIN"/>
    <property type="match status" value="1"/>
</dbReference>
<dbReference type="PANTHER" id="PTHR13037:SF24">
    <property type="entry name" value="POLYCOMB PROTEIN PCL-RELATED"/>
    <property type="match status" value="1"/>
</dbReference>
<dbReference type="Pfam" id="PF05750">
    <property type="entry name" value="Rubella_Capsid"/>
    <property type="match status" value="1"/>
</dbReference>
<dbReference type="Pfam" id="PF05748">
    <property type="entry name" value="Rubella_E1"/>
    <property type="match status" value="1"/>
</dbReference>
<dbReference type="Pfam" id="PF05749">
    <property type="entry name" value="Rubella_E2"/>
    <property type="match status" value="1"/>
</dbReference>
<keyword id="KW-0106">Calcium</keyword>
<keyword id="KW-0167">Capsid protein</keyword>
<keyword id="KW-1165">Clathrin-mediated endocytosis of virus by host</keyword>
<keyword id="KW-1015">Disulfide bond</keyword>
<keyword id="KW-1170">Fusion of virus membrane with host endosomal membrane</keyword>
<keyword id="KW-1168">Fusion of virus membrane with host membrane</keyword>
<keyword id="KW-0325">Glycoprotein</keyword>
<keyword id="KW-1035">Host cytoplasm</keyword>
<keyword id="KW-1040">Host Golgi apparatus</keyword>
<keyword id="KW-1043">Host membrane</keyword>
<keyword id="KW-1045">Host mitochondrion</keyword>
<keyword id="KW-0945">Host-virus interaction</keyword>
<keyword id="KW-0449">Lipoprotein</keyword>
<keyword id="KW-0472">Membrane</keyword>
<keyword id="KW-0479">Metal-binding</keyword>
<keyword id="KW-0564">Palmitate</keyword>
<keyword id="KW-0597">Phosphoprotein</keyword>
<keyword id="KW-0694">RNA-binding</keyword>
<keyword id="KW-1144">T=4 icosahedral capsid protein</keyword>
<keyword id="KW-0812">Transmembrane</keyword>
<keyword id="KW-1133">Transmembrane helix</keyword>
<keyword id="KW-1161">Viral attachment to host cell</keyword>
<keyword id="KW-0261">Viral envelope protein</keyword>
<keyword id="KW-1162">Viral penetration into host cytoplasm</keyword>
<keyword id="KW-0946">Virion</keyword>
<keyword id="KW-1164">Virus endocytosis by host</keyword>
<keyword id="KW-1160">Virus entry into host cell</keyword>
<comment type="function">
    <molecule>Capsid protein</molecule>
    <text evidence="3">Capsid protein interacts with genomic RNA and assembles into icosahedric core particles 65-70 nm in diameter. The resulting nucleocapsid eventually associates with the cytoplasmic domain of E2 at the cell membrane, leading to budding and formation of mature virions from host Golgi membranes. Phosphorylation negatively regulates RNA-binding activity, possibly delaying virion assembly during the viral replication phase. Capsid protein dimerizes and becomes disulfide-linked in the virion. Modulates genomic RNA replication. Modulates subgenomic RNA synthesis by interacting with human C1QBP/SF2P32. Induces both perinuclear clustering of mitochondria and the formation of electron-dense intermitochondrial plaques, both hallmarks of rubella virus infected cells. Induces apoptosis when expressed in transfected cells.</text>
</comment>
<comment type="function">
    <molecule>Spike glycoprotein E2</molecule>
    <text evidence="3">Responsible for viral attachment to target host cell, by binding to the cell receptor. Its transport to the plasma membrane depends on interaction with E1 protein. The surface glycoproteins display an irregular helical organization and a pseudo-tetrameric inner nucleocapsid arrangement.</text>
</comment>
<comment type="function">
    <molecule>Spike glycoprotein E1</molecule>
    <text evidence="2 3">Class II viral fusion protein (By similarity). Fusion activity is inactive as long as E1 is bound to E2 in mature virion. After virus attachment to target cell and clathrin-mediated endocytosis, acidification of the endosome would induce dissociation of E1/E2 heterodimer and concomitant trimerization of the E1 subunits (By similarity). This E1 homotrimer is fusion active, and promotes release of viral nucleocapsid in cytoplasm after endosome and viral membrane fusion. The cytoplasmic tail of spike glycoprotein E1 modulates virus release. The surface glycoproteins display an irregular helical organization and a pseudo-tetrameric inner nucleocapsid arrangement (By similarity).</text>
</comment>
<comment type="subunit">
    <molecule>Capsid protein</molecule>
    <text evidence="3">Homodimer; further assembles into homooligomer. Interacts with human C1QBP. Interacts (via N-terminus) with protease/methyltransferase p150.</text>
</comment>
<comment type="subunit">
    <molecule>Spike glycoprotein E1</molecule>
    <text evidence="3">Heterodimer with spike glycoprotein E2.</text>
</comment>
<comment type="subunit">
    <molecule>Spike glycoprotein E2</molecule>
    <text evidence="3">Heterodimer with spike glycoprotein E1.</text>
</comment>
<comment type="subcellular location">
    <molecule>Capsid protein</molecule>
    <subcellularLocation>
        <location evidence="3">Virion</location>
    </subcellularLocation>
    <subcellularLocation>
        <location>Host cytoplasm</location>
    </subcellularLocation>
    <subcellularLocation>
        <location evidence="3">Host mitochondrion</location>
    </subcellularLocation>
    <text evidence="3">The capsid protein is concentrated around Golgi region (By similarity). In the virion, it is probably associated to the viral membrane (By similarity).</text>
</comment>
<comment type="subcellular location">
    <molecule>Spike glycoprotein E2</molecule>
    <subcellularLocation>
        <location evidence="3">Virion membrane</location>
        <topology evidence="3">Single-pass type I membrane protein</topology>
    </subcellularLocation>
    <subcellularLocation>
        <location evidence="3">Host Golgi apparatus membrane</location>
        <topology evidence="3">Single-pass type I membrane protein</topology>
    </subcellularLocation>
    <text evidence="3">E1 and E2 form heterodimer in the endoplasmic reticulum before they are transported to and retained in the Golgi complex, where virus assembly occurs. E1 possesses an endoplasmic reticulum retention signal, and unassembled E2 and E1 subunits are retained in the endoplasmic reticulum. Presumably, assembly of E2 and E1 would mask the signal, thereby allowing transport of the heterodimer to the Golgi complex.</text>
</comment>
<comment type="subcellular location">
    <molecule>Spike glycoprotein E1</molecule>
    <subcellularLocation>
        <location evidence="3">Virion membrane</location>
        <topology evidence="3">Single-pass type I membrane protein</topology>
    </subcellularLocation>
    <subcellularLocation>
        <location evidence="3">Host Golgi apparatus membrane</location>
        <topology evidence="3">Single-pass type I membrane protein</topology>
    </subcellularLocation>
    <text evidence="3">E1 and E2 form heterodimer in the endoplasmic reticulum before they are transported to and retained in the Golgi complex, where virus assembly occurs. E1 possesses an endoplasmic reticulum retention signal, and unassembled E2 and E1 subunits are retained in the endoplasmic reticulum. Presumably, assembly of E2 and E1 would mask the signal, thereby allowing transport of the heterodimer to the Golgi complex.</text>
</comment>
<comment type="domain">
    <text evidence="3">Structural polyprotein: Contains two internal signal peptides that are necessary for directing translocation of the glycoproteins into the lumen of the endoplasmic reticulum.</text>
</comment>
<comment type="domain">
    <molecule>Capsid protein</molecule>
    <text evidence="3">The capsid protein is probably attached to the viral membrane through the E2 signal peptide. This domain is also required for the localization of the capsid protein to the juxtanuclear region and subsequent virus assembly at the Golgi complex.</text>
</comment>
<comment type="PTM">
    <text evidence="3">Structural polyprotein: Specific enzymatic cleavages in vivo yield mature proteins. Two signal peptidase-mediated cleavages within the polyprotein produce the structural proteins capsid, E2, and E1. The E2 signal peptide remains attached to the C-terminus of the capsid protein after cleavage by the signal peptidase. Another signal peptide at E2 C-terminus directs E1 to the ER, with a similar mechanism.</text>
</comment>
<comment type="PTM">
    <molecule>Spike glycoprotein E1</molecule>
    <text evidence="3">Contains three N-linked oligosaccharides.</text>
</comment>
<comment type="PTM">
    <text evidence="1 3">Capsid is phosphorylated on Ser-46 by host. This phosphorylation negatively regulates capsid protein RNA-binding activity (By similarity). Dephosphorylated by human PP1A (By similarity).</text>
</comment>
<comment type="miscellaneous">
    <text evidence="3">Structural polyprotein: Translated from a subgenomic RNA synthesized during togaviruses replication.</text>
</comment>
<organism>
    <name type="scientific">Rubella virus (strain BRDII)</name>
    <name type="common">RUBV</name>
    <dbReference type="NCBI Taxonomy" id="376263"/>
    <lineage>
        <taxon>Viruses</taxon>
        <taxon>Riboviria</taxon>
        <taxon>Orthornavirae</taxon>
        <taxon>Kitrinoviricota</taxon>
        <taxon>Alsuviricetes</taxon>
        <taxon>Hepelivirales</taxon>
        <taxon>Matonaviridae</taxon>
        <taxon>Rubivirus</taxon>
        <taxon>Rubivirus rubellae</taxon>
    </lineage>
</organism>
<sequence>MASTTPITMEDLQKALEAQSRALRAELAAGASQLRRPRPPRQRDSSTSGDDSGRDSGGPRRRRGNRGRGQRKDWSKAPPPPEERQESRSQTPVPKPPRAPPQPPQPPRMQTGRGGTAPRPELGPPTNPFQAAVARGLRPPLHDPDTEAPTEACVTSWLWSEGEGAVFYRVDLHFTNLGTRPLDEDGRWDPALMYNPCGPEPPAHVVRAYNQPAGDVRGIWGKGERTYAEQDFRVGGTRWHRLLRMPVRGLDGDSAPLPPHTTERIETRSARHPWRIRFGAPQVFLAGLLLAAVAVGTARAGLQPRTDIAAPPAPPQAPRAHGKHYGHHHHQLPFLGHDGHHGGTLRVGQHHRNASDVLPGHWLQGSWGCYNLSDWHQGTHVCHTKHMDFWCVEHDRPPPVTPTPLTTAANSTTAATPATTPAPCHAGLNDSCGGFLSGCGPMRLRHGADTRCGRLICGLSTTAQYPPTRFGCTMRWGLPPWELVVLTARPEDGWTCRGVPAHPGTRCPELVSPMGHATCSPASALWLATANALSLDHALAAVVLLVPWVLIFMLCRRACRRRGAAAALTAVVLQGYNPPAYGEEAFTYLCTAPGCATQTPVPVRLAGVRFESKIVDGGCFAPWDLEATGACICEIPTDVSCEGLGAWVPAAPCARIWNGTQRACTFWAVNAYSSGGYAQLASYFNPGGSYYKQYHPTACDVEPAFGHSDAACWGFPTDTVMSVFALASYVQHPDKTVRVKFHTETRTVWQLSVAGVSCNVTTEHPFCNTPHGQLEVQVPPDPGDLVEYIMNYTGNQQSRWGLGSPNCHGPDWASPVCQRHSPDCSRLVGATPERPRLRLVDADDPLLRTAPGPGEVWVTPVIGSQARKCGLHIRAGPYGHATVEMPEWIHAHTTSDPWHPPGPLGLKFKTVRPVALPRALAPPRNVRVTGCYQCGTPALVEGLAPGGGNCHLTVNGEDVGAFPPGKFVTAALLNTPPPYQVSCGGESDRASARVIDPAAQSFTGVVYGTHTTAVSETRQTWAEWAAAHWWQLTLGAICALLLAGLLACCAKCLYHLRGAIAPR</sequence>
<protein>
    <recommendedName>
        <fullName>Structural polyprotein</fullName>
    </recommendedName>
    <alternativeName>
        <fullName>p110</fullName>
    </alternativeName>
    <component>
        <recommendedName>
            <fullName>Capsid protein</fullName>
        </recommendedName>
        <alternativeName>
            <fullName>Coat protein</fullName>
            <shortName>C</shortName>
        </alternativeName>
    </component>
    <component>
        <recommendedName>
            <fullName>Spike glycoprotein E2</fullName>
        </recommendedName>
        <alternativeName>
            <fullName>E2 envelope glycoprotein</fullName>
        </alternativeName>
    </component>
    <component>
        <recommendedName>
            <fullName>Spike glycoprotein E1</fullName>
        </recommendedName>
        <alternativeName>
            <fullName>E1 envelope glycoprotein</fullName>
        </alternativeName>
    </component>
</protein>